<evidence type="ECO:0000255" key="1">
    <source>
        <dbReference type="HAMAP-Rule" id="MF_00340"/>
    </source>
</evidence>
<evidence type="ECO:0000305" key="2"/>
<reference key="1">
    <citation type="journal article" date="2006" name="Genome Res.">
        <title>Skewed genomic variability in strains of the toxigenic bacterial pathogen, Clostridium perfringens.</title>
        <authorList>
            <person name="Myers G.S.A."/>
            <person name="Rasko D.A."/>
            <person name="Cheung J.K."/>
            <person name="Ravel J."/>
            <person name="Seshadri R."/>
            <person name="DeBoy R.T."/>
            <person name="Ren Q."/>
            <person name="Varga J."/>
            <person name="Awad M.M."/>
            <person name="Brinkac L.M."/>
            <person name="Daugherty S.C."/>
            <person name="Haft D.H."/>
            <person name="Dodson R.J."/>
            <person name="Madupu R."/>
            <person name="Nelson W.C."/>
            <person name="Rosovitz M.J."/>
            <person name="Sullivan S.A."/>
            <person name="Khouri H."/>
            <person name="Dimitrov G.I."/>
            <person name="Watkins K.L."/>
            <person name="Mulligan S."/>
            <person name="Benton J."/>
            <person name="Radune D."/>
            <person name="Fisher D.J."/>
            <person name="Atkins H.S."/>
            <person name="Hiscox T."/>
            <person name="Jost B.H."/>
            <person name="Billington S.J."/>
            <person name="Songer J.G."/>
            <person name="McClane B.A."/>
            <person name="Titball R.W."/>
            <person name="Rood J.I."/>
            <person name="Melville S.B."/>
            <person name="Paulsen I.T."/>
        </authorList>
    </citation>
    <scope>NUCLEOTIDE SEQUENCE [LARGE SCALE GENOMIC DNA]</scope>
    <source>
        <strain>SM101 / Type A</strain>
    </source>
</reference>
<dbReference type="EMBL" id="CP000312">
    <property type="protein sequence ID" value="ABG87229.1"/>
    <property type="molecule type" value="Genomic_DNA"/>
</dbReference>
<dbReference type="RefSeq" id="WP_003449428.1">
    <property type="nucleotide sequence ID" value="NZ_CAXVKH010000001.1"/>
</dbReference>
<dbReference type="SMR" id="Q0SS99"/>
<dbReference type="GeneID" id="93001741"/>
<dbReference type="KEGG" id="cpr:CPR_1693"/>
<dbReference type="Proteomes" id="UP000001824">
    <property type="component" value="Chromosome"/>
</dbReference>
<dbReference type="GO" id="GO:0015934">
    <property type="term" value="C:large ribosomal subunit"/>
    <property type="evidence" value="ECO:0007669"/>
    <property type="project" value="InterPro"/>
</dbReference>
<dbReference type="GO" id="GO:0003735">
    <property type="term" value="F:structural constituent of ribosome"/>
    <property type="evidence" value="ECO:0007669"/>
    <property type="project" value="InterPro"/>
</dbReference>
<dbReference type="GO" id="GO:0006412">
    <property type="term" value="P:translation"/>
    <property type="evidence" value="ECO:0007669"/>
    <property type="project" value="UniProtKB-UniRule"/>
</dbReference>
<dbReference type="HAMAP" id="MF_00340">
    <property type="entry name" value="Ribosomal_bL32"/>
    <property type="match status" value="1"/>
</dbReference>
<dbReference type="InterPro" id="IPR002677">
    <property type="entry name" value="Ribosomal_bL32"/>
</dbReference>
<dbReference type="InterPro" id="IPR044957">
    <property type="entry name" value="Ribosomal_bL32_bact"/>
</dbReference>
<dbReference type="InterPro" id="IPR011332">
    <property type="entry name" value="Ribosomal_zn-bd"/>
</dbReference>
<dbReference type="NCBIfam" id="TIGR01031">
    <property type="entry name" value="rpmF_bact"/>
    <property type="match status" value="1"/>
</dbReference>
<dbReference type="PANTHER" id="PTHR35534">
    <property type="entry name" value="50S RIBOSOMAL PROTEIN L32"/>
    <property type="match status" value="1"/>
</dbReference>
<dbReference type="PANTHER" id="PTHR35534:SF2">
    <property type="entry name" value="LARGE RIBOSOMAL SUBUNIT PROTEIN BL32"/>
    <property type="match status" value="1"/>
</dbReference>
<dbReference type="Pfam" id="PF01783">
    <property type="entry name" value="Ribosomal_L32p"/>
    <property type="match status" value="1"/>
</dbReference>
<dbReference type="SUPFAM" id="SSF57829">
    <property type="entry name" value="Zn-binding ribosomal proteins"/>
    <property type="match status" value="1"/>
</dbReference>
<comment type="similarity">
    <text evidence="1">Belongs to the bacterial ribosomal protein bL32 family.</text>
</comment>
<proteinExistence type="inferred from homology"/>
<gene>
    <name evidence="1" type="primary">rpmF</name>
    <name type="ordered locus">CPR_1693</name>
</gene>
<keyword id="KW-0687">Ribonucleoprotein</keyword>
<keyword id="KW-0689">Ribosomal protein</keyword>
<organism>
    <name type="scientific">Clostridium perfringens (strain SM101 / Type A)</name>
    <dbReference type="NCBI Taxonomy" id="289380"/>
    <lineage>
        <taxon>Bacteria</taxon>
        <taxon>Bacillati</taxon>
        <taxon>Bacillota</taxon>
        <taxon>Clostridia</taxon>
        <taxon>Eubacteriales</taxon>
        <taxon>Clostridiaceae</taxon>
        <taxon>Clostridium</taxon>
    </lineage>
</organism>
<accession>Q0SS99</accession>
<sequence>MGNPARKTFRAKRDSRRAQTFKASLPGIVECPQCHEMKMAHRVCKNCGHYKGKEVVSVEE</sequence>
<protein>
    <recommendedName>
        <fullName evidence="1">Large ribosomal subunit protein bL32</fullName>
    </recommendedName>
    <alternativeName>
        <fullName evidence="2">50S ribosomal protein L32</fullName>
    </alternativeName>
</protein>
<feature type="chain" id="PRO_0000296450" description="Large ribosomal subunit protein bL32">
    <location>
        <begin position="1"/>
        <end position="60"/>
    </location>
</feature>
<name>RL32_CLOPS</name>